<accession>P0A2X1</accession>
<accession>P03868</accession>
<gene>
    <name type="primary">tms2</name>
    <name type="synonym">iaaH</name>
</gene>
<comment type="function">
    <text evidence="1">Hydrolyzes indole-3-acetamide (IAM) into indole-3-acetic acid (IAA).</text>
</comment>
<comment type="pathway">
    <text>Plant hormone metabolism; auxin biosynthesis.</text>
</comment>
<comment type="similarity">
    <text evidence="2">Belongs to the amidase family.</text>
</comment>
<feature type="chain" id="PRO_0000105242" description="Indoleacetamide hydrolase">
    <location>
        <begin position="1"/>
        <end position="467"/>
    </location>
</feature>
<feature type="active site" description="Charge relay system" evidence="1">
    <location>
        <position position="74"/>
    </location>
</feature>
<feature type="active site" description="Charge relay system" evidence="1">
    <location>
        <position position="149"/>
    </location>
</feature>
<feature type="active site" description="Acyl-ester intermediate" evidence="1">
    <location>
        <position position="173"/>
    </location>
</feature>
<organism>
    <name type="scientific">Agrobacterium tumefaciens (strain Ach5)</name>
    <dbReference type="NCBI Taxonomy" id="176298"/>
    <lineage>
        <taxon>Bacteria</taxon>
        <taxon>Pseudomonadati</taxon>
        <taxon>Pseudomonadota</taxon>
        <taxon>Alphaproteobacteria</taxon>
        <taxon>Hyphomicrobiales</taxon>
        <taxon>Rhizobiaceae</taxon>
        <taxon>Rhizobium/Agrobacterium group</taxon>
        <taxon>Agrobacterium</taxon>
        <taxon>Agrobacterium tumefaciens complex</taxon>
    </lineage>
</organism>
<proteinExistence type="inferred from homology"/>
<reference key="1">
    <citation type="journal article" date="1984" name="EMBO J.">
        <title>The complete nucleotide sequence of the TL-DNA of the Agrobacterium tumefaciens plasmid pTiAch5.</title>
        <authorList>
            <person name="Gielen J."/>
            <person name="de Beuckeleer M."/>
            <person name="Seurinck J."/>
            <person name="Deboeck F."/>
            <person name="de Greve H."/>
            <person name="Lemmers M."/>
            <person name="van Montagu M."/>
            <person name="Schell J."/>
        </authorList>
    </citation>
    <scope>NUCLEOTIDE SEQUENCE [GENOMIC DNA]</scope>
</reference>
<reference key="2">
    <citation type="submission" date="2000-03" db="EMBL/GenBank/DDBJ databases">
        <title>Octopine-type Ti plasmid sequence.</title>
        <authorList>
            <person name="Winans S.C."/>
            <person name="Zhu J."/>
            <person name="Oger P.M."/>
            <person name="Schrammeijer B."/>
            <person name="Hooykaas P.J."/>
            <person name="Farrand S.K."/>
        </authorList>
    </citation>
    <scope>NUCLEOTIDE SEQUENCE [GENOMIC DNA]</scope>
</reference>
<sequence length="467" mass="49805">MVAITSLAQSLEHLKRKDYSCLELVETLIARCEAAKSLNALLATDWDGLRRSAKKIDRHGNAGVGLCGIPLCFKANIATGVFPTSAATPALINHLPKIPSRVAERLFSAGALPGASGNMHELSFGITSNNYATGAVRNPWNPDLIPGGSSGGVAAAVASRLMLGGIGTDTGASVRLPAALCGVVGFRPTLGRYPGDRIIPVSPTRDTPGIIAQCVADVVILDRIISGTPERIPPVPLKGLRIGLPTTYFYDDLDADVALAAETTIRLLANKGVTFVEANIPHLDELNKGASFPVALYEFPHALKQYLDDFVKTVSFSDVIKGIRSPDVANIANAQIDGHQISKAEYELARHSFRPRLQATYRNYFKLNRLDAILFPTAPLVARPIGQDSSVIHNGTMLDTFKIYVRNVDPSSNAGLPGLSIPVCLTPDRLPVGMEIDGLADSDQRLLAIGGALEEAIGFRYFAGLPN</sequence>
<protein>
    <recommendedName>
        <fullName>Indoleacetamide hydrolase</fullName>
        <shortName>IAH</shortName>
        <ecNumber>3.5.1.-</ecNumber>
    </recommendedName>
    <alternativeName>
        <fullName>Indole-3-acetamide hydrolase</fullName>
    </alternativeName>
</protein>
<keyword id="KW-0073">Auxin biosynthesis</keyword>
<keyword id="KW-0192">Crown gall tumor</keyword>
<keyword id="KW-0378">Hydrolase</keyword>
<keyword id="KW-0614">Plasmid</keyword>
<name>HYIN_AGRT4</name>
<geneLocation type="plasmid">
    <name>pTiAch5</name>
</geneLocation>
<evidence type="ECO:0000250" key="1"/>
<evidence type="ECO:0000305" key="2"/>
<dbReference type="EC" id="3.5.1.-"/>
<dbReference type="PIR" id="A04501">
    <property type="entry name" value="Q2AGAT"/>
</dbReference>
<dbReference type="SMR" id="P0A2X1"/>
<dbReference type="UniPathway" id="UPA00151"/>
<dbReference type="GO" id="GO:0016787">
    <property type="term" value="F:hydrolase activity"/>
    <property type="evidence" value="ECO:0007669"/>
    <property type="project" value="UniProtKB-KW"/>
</dbReference>
<dbReference type="GO" id="GO:0009851">
    <property type="term" value="P:auxin biosynthetic process"/>
    <property type="evidence" value="ECO:0007669"/>
    <property type="project" value="UniProtKB-UniPathway"/>
</dbReference>
<dbReference type="Gene3D" id="3.90.1300.10">
    <property type="entry name" value="Amidase signature (AS) domain"/>
    <property type="match status" value="1"/>
</dbReference>
<dbReference type="InterPro" id="IPR000120">
    <property type="entry name" value="Amidase"/>
</dbReference>
<dbReference type="InterPro" id="IPR020556">
    <property type="entry name" value="Amidase_CS"/>
</dbReference>
<dbReference type="InterPro" id="IPR023631">
    <property type="entry name" value="Amidase_dom"/>
</dbReference>
<dbReference type="InterPro" id="IPR036928">
    <property type="entry name" value="AS_sf"/>
</dbReference>
<dbReference type="NCBIfam" id="NF005688">
    <property type="entry name" value="PRK07488.1"/>
    <property type="match status" value="1"/>
</dbReference>
<dbReference type="PANTHER" id="PTHR11895:SF151">
    <property type="entry name" value="GLUTAMYL-TRNA(GLN) AMIDOTRANSFERASE SUBUNIT A"/>
    <property type="match status" value="1"/>
</dbReference>
<dbReference type="PANTHER" id="PTHR11895">
    <property type="entry name" value="TRANSAMIDASE"/>
    <property type="match status" value="1"/>
</dbReference>
<dbReference type="Pfam" id="PF01425">
    <property type="entry name" value="Amidase"/>
    <property type="match status" value="1"/>
</dbReference>
<dbReference type="SUPFAM" id="SSF75304">
    <property type="entry name" value="Amidase signature (AS) enzymes"/>
    <property type="match status" value="1"/>
</dbReference>
<dbReference type="PROSITE" id="PS00571">
    <property type="entry name" value="AMIDASES"/>
    <property type="match status" value="1"/>
</dbReference>